<evidence type="ECO:0000250" key="1"/>
<evidence type="ECO:0000250" key="2">
    <source>
        <dbReference type="UniProtKB" id="Q9UK53"/>
    </source>
</evidence>
<evidence type="ECO:0000255" key="3">
    <source>
        <dbReference type="PROSITE-ProRule" id="PRU00146"/>
    </source>
</evidence>
<evidence type="ECO:0000256" key="4">
    <source>
        <dbReference type="SAM" id="MobiDB-lite"/>
    </source>
</evidence>
<evidence type="ECO:0000305" key="5"/>
<keyword id="KW-0131">Cell cycle</keyword>
<keyword id="KW-0156">Chromatin regulator</keyword>
<keyword id="KW-0227">DNA damage</keyword>
<keyword id="KW-0234">DNA repair</keyword>
<keyword id="KW-0469">Meiosis</keyword>
<keyword id="KW-0479">Metal-binding</keyword>
<keyword id="KW-0539">Nucleus</keyword>
<keyword id="KW-1185">Reference proteome</keyword>
<keyword id="KW-0862">Zinc</keyword>
<keyword id="KW-0863">Zinc-finger</keyword>
<reference key="1">
    <citation type="journal article" date="2004" name="Nature">
        <title>Genome evolution in yeasts.</title>
        <authorList>
            <person name="Dujon B."/>
            <person name="Sherman D."/>
            <person name="Fischer G."/>
            <person name="Durrens P."/>
            <person name="Casaregola S."/>
            <person name="Lafontaine I."/>
            <person name="de Montigny J."/>
            <person name="Marck C."/>
            <person name="Neuveglise C."/>
            <person name="Talla E."/>
            <person name="Goffard N."/>
            <person name="Frangeul L."/>
            <person name="Aigle M."/>
            <person name="Anthouard V."/>
            <person name="Babour A."/>
            <person name="Barbe V."/>
            <person name="Barnay S."/>
            <person name="Blanchin S."/>
            <person name="Beckerich J.-M."/>
            <person name="Beyne E."/>
            <person name="Bleykasten C."/>
            <person name="Boisrame A."/>
            <person name="Boyer J."/>
            <person name="Cattolico L."/>
            <person name="Confanioleri F."/>
            <person name="de Daruvar A."/>
            <person name="Despons L."/>
            <person name="Fabre E."/>
            <person name="Fairhead C."/>
            <person name="Ferry-Dumazet H."/>
            <person name="Groppi A."/>
            <person name="Hantraye F."/>
            <person name="Hennequin C."/>
            <person name="Jauniaux N."/>
            <person name="Joyet P."/>
            <person name="Kachouri R."/>
            <person name="Kerrest A."/>
            <person name="Koszul R."/>
            <person name="Lemaire M."/>
            <person name="Lesur I."/>
            <person name="Ma L."/>
            <person name="Muller H."/>
            <person name="Nicaud J.-M."/>
            <person name="Nikolski M."/>
            <person name="Oztas S."/>
            <person name="Ozier-Kalogeropoulos O."/>
            <person name="Pellenz S."/>
            <person name="Potier S."/>
            <person name="Richard G.-F."/>
            <person name="Straub M.-L."/>
            <person name="Suleau A."/>
            <person name="Swennen D."/>
            <person name="Tekaia F."/>
            <person name="Wesolowski-Louvel M."/>
            <person name="Westhof E."/>
            <person name="Wirth B."/>
            <person name="Zeniou-Meyer M."/>
            <person name="Zivanovic Y."/>
            <person name="Bolotin-Fukuhara M."/>
            <person name="Thierry A."/>
            <person name="Bouchier C."/>
            <person name="Caudron B."/>
            <person name="Scarpelli C."/>
            <person name="Gaillardin C."/>
            <person name="Weissenbach J."/>
            <person name="Wincker P."/>
            <person name="Souciet J.-L."/>
        </authorList>
    </citation>
    <scope>NUCLEOTIDE SEQUENCE [LARGE SCALE GENOMIC DNA]</scope>
    <source>
        <strain>ATCC 2001 / BCRC 20586 / JCM 3761 / NBRC 0622 / NRRL Y-65 / CBS 138</strain>
    </source>
</reference>
<proteinExistence type="inferred from homology"/>
<name>YNG2_CANGA</name>
<sequence>MDPSLLLDQMLQDVSNLPAEFRYMLEEVGLEDEQCLELRKRYQQKEGILHKYIKQNGSLAANPKEDELLAEVEQSMAQVRELQEEKCQRANTILFLVSRHLNKLQQNIIMLEEDGLLAPAEDEMESGPDFSRESSVVGSTVSERKRKAASEDHPRRKKQSRSMSNTHREKSYNKGDDTADVKSPASTEREGTLDLQNYQEELFSSMNDNEKEDQNLYCFCQRVSFGEMVACDGPNCKYEWFHYECVNLTEPPKGTWYCPDCKQEMSKKLKKKKQ</sequence>
<organism>
    <name type="scientific">Candida glabrata (strain ATCC 2001 / BCRC 20586 / JCM 3761 / NBRC 0622 / NRRL Y-65 / CBS 138)</name>
    <name type="common">Yeast</name>
    <name type="synonym">Nakaseomyces glabratus</name>
    <dbReference type="NCBI Taxonomy" id="284593"/>
    <lineage>
        <taxon>Eukaryota</taxon>
        <taxon>Fungi</taxon>
        <taxon>Dikarya</taxon>
        <taxon>Ascomycota</taxon>
        <taxon>Saccharomycotina</taxon>
        <taxon>Saccharomycetes</taxon>
        <taxon>Saccharomycetales</taxon>
        <taxon>Saccharomycetaceae</taxon>
        <taxon>Nakaseomyces</taxon>
    </lineage>
</organism>
<dbReference type="EMBL" id="CR380954">
    <property type="protein sequence ID" value="CAG59816.1"/>
    <property type="molecule type" value="Genomic_DNA"/>
</dbReference>
<dbReference type="RefSeq" id="XP_446883.1">
    <property type="nucleotide sequence ID" value="XM_446883.1"/>
</dbReference>
<dbReference type="SMR" id="Q6FSB1"/>
<dbReference type="FunCoup" id="Q6FSB1">
    <property type="interactions" value="339"/>
</dbReference>
<dbReference type="STRING" id="284593.Q6FSB1"/>
<dbReference type="EnsemblFungi" id="CAGL0H02035g-T">
    <property type="protein sequence ID" value="CAGL0H02035g-T-p1"/>
    <property type="gene ID" value="CAGL0H02035g"/>
</dbReference>
<dbReference type="KEGG" id="cgr:2888625"/>
<dbReference type="CGD" id="CAL0131494">
    <property type="gene designation" value="CAGL0H02035g"/>
</dbReference>
<dbReference type="VEuPathDB" id="FungiDB:CAGL0H02035g"/>
<dbReference type="eggNOG" id="KOG1973">
    <property type="taxonomic scope" value="Eukaryota"/>
</dbReference>
<dbReference type="HOGENOM" id="CLU_031900_2_0_1"/>
<dbReference type="InParanoid" id="Q6FSB1"/>
<dbReference type="OMA" id="GPNCKYE"/>
<dbReference type="Proteomes" id="UP000002428">
    <property type="component" value="Chromosome H"/>
</dbReference>
<dbReference type="GO" id="GO:0005829">
    <property type="term" value="C:cytosol"/>
    <property type="evidence" value="ECO:0007669"/>
    <property type="project" value="EnsemblFungi"/>
</dbReference>
<dbReference type="GO" id="GO:0035267">
    <property type="term" value="C:NuA4 histone acetyltransferase complex"/>
    <property type="evidence" value="ECO:0007669"/>
    <property type="project" value="EnsemblFungi"/>
</dbReference>
<dbReference type="GO" id="GO:0000786">
    <property type="term" value="C:nucleosome"/>
    <property type="evidence" value="ECO:0007669"/>
    <property type="project" value="EnsemblFungi"/>
</dbReference>
<dbReference type="GO" id="GO:0005634">
    <property type="term" value="C:nucleus"/>
    <property type="evidence" value="ECO:0007669"/>
    <property type="project" value="UniProtKB-SubCell"/>
</dbReference>
<dbReference type="GO" id="GO:0032777">
    <property type="term" value="C:piccolo histone acetyltransferase complex"/>
    <property type="evidence" value="ECO:0007669"/>
    <property type="project" value="EnsemblFungi"/>
</dbReference>
<dbReference type="GO" id="GO:0004402">
    <property type="term" value="F:histone acetyltransferase activity"/>
    <property type="evidence" value="ECO:0007669"/>
    <property type="project" value="EnsemblFungi"/>
</dbReference>
<dbReference type="GO" id="GO:0140002">
    <property type="term" value="F:histone H3K4me3 reader activity"/>
    <property type="evidence" value="ECO:0007669"/>
    <property type="project" value="EnsemblFungi"/>
</dbReference>
<dbReference type="GO" id="GO:0035064">
    <property type="term" value="F:methylated histone binding"/>
    <property type="evidence" value="ECO:0007669"/>
    <property type="project" value="EnsemblFungi"/>
</dbReference>
<dbReference type="GO" id="GO:0008270">
    <property type="term" value="F:zinc ion binding"/>
    <property type="evidence" value="ECO:0007669"/>
    <property type="project" value="UniProtKB-KW"/>
</dbReference>
<dbReference type="GO" id="GO:0006281">
    <property type="term" value="P:DNA repair"/>
    <property type="evidence" value="ECO:0007669"/>
    <property type="project" value="UniProtKB-KW"/>
</dbReference>
<dbReference type="GO" id="GO:0051321">
    <property type="term" value="P:meiotic cell cycle"/>
    <property type="evidence" value="ECO:0007669"/>
    <property type="project" value="UniProtKB-KW"/>
</dbReference>
<dbReference type="GO" id="GO:0006355">
    <property type="term" value="P:regulation of DNA-templated transcription"/>
    <property type="evidence" value="ECO:0007669"/>
    <property type="project" value="TreeGrafter"/>
</dbReference>
<dbReference type="CDD" id="cd16858">
    <property type="entry name" value="ING_ING3_Yng2p"/>
    <property type="match status" value="1"/>
</dbReference>
<dbReference type="CDD" id="cd15505">
    <property type="entry name" value="PHD_ING"/>
    <property type="match status" value="1"/>
</dbReference>
<dbReference type="FunFam" id="3.30.40.10:FF:000436">
    <property type="entry name" value="Chromatin modification-related protein"/>
    <property type="match status" value="1"/>
</dbReference>
<dbReference type="Gene3D" id="6.10.140.1740">
    <property type="match status" value="1"/>
</dbReference>
<dbReference type="Gene3D" id="3.30.40.10">
    <property type="entry name" value="Zinc/RING finger domain, C3HC4 (zinc finger)"/>
    <property type="match status" value="1"/>
</dbReference>
<dbReference type="InterPro" id="IPR028651">
    <property type="entry name" value="ING_fam"/>
</dbReference>
<dbReference type="InterPro" id="IPR024610">
    <property type="entry name" value="ING_N_histone-binding"/>
</dbReference>
<dbReference type="InterPro" id="IPR019786">
    <property type="entry name" value="Zinc_finger_PHD-type_CS"/>
</dbReference>
<dbReference type="InterPro" id="IPR011011">
    <property type="entry name" value="Znf_FYVE_PHD"/>
</dbReference>
<dbReference type="InterPro" id="IPR001965">
    <property type="entry name" value="Znf_PHD"/>
</dbReference>
<dbReference type="InterPro" id="IPR019787">
    <property type="entry name" value="Znf_PHD-finger"/>
</dbReference>
<dbReference type="InterPro" id="IPR013083">
    <property type="entry name" value="Znf_RING/FYVE/PHD"/>
</dbReference>
<dbReference type="PANTHER" id="PTHR10333:SF100">
    <property type="entry name" value="CHROMATIN MODIFICATION-RELATED PROTEIN YNG2"/>
    <property type="match status" value="1"/>
</dbReference>
<dbReference type="PANTHER" id="PTHR10333">
    <property type="entry name" value="INHIBITOR OF GROWTH PROTEIN"/>
    <property type="match status" value="1"/>
</dbReference>
<dbReference type="Pfam" id="PF12998">
    <property type="entry name" value="ING"/>
    <property type="match status" value="1"/>
</dbReference>
<dbReference type="Pfam" id="PF00628">
    <property type="entry name" value="PHD"/>
    <property type="match status" value="1"/>
</dbReference>
<dbReference type="SMART" id="SM01408">
    <property type="entry name" value="ING"/>
    <property type="match status" value="1"/>
</dbReference>
<dbReference type="SMART" id="SM00249">
    <property type="entry name" value="PHD"/>
    <property type="match status" value="1"/>
</dbReference>
<dbReference type="SUPFAM" id="SSF57903">
    <property type="entry name" value="FYVE/PHD zinc finger"/>
    <property type="match status" value="1"/>
</dbReference>
<dbReference type="PROSITE" id="PS01359">
    <property type="entry name" value="ZF_PHD_1"/>
    <property type="match status" value="1"/>
</dbReference>
<dbReference type="PROSITE" id="PS50016">
    <property type="entry name" value="ZF_PHD_2"/>
    <property type="match status" value="1"/>
</dbReference>
<feature type="chain" id="PRO_0000212675" description="Chromatin modification-related protein YNG2">
    <location>
        <begin position="1"/>
        <end position="274"/>
    </location>
</feature>
<feature type="zinc finger region" description="PHD-type" evidence="3">
    <location>
        <begin position="215"/>
        <end position="264"/>
    </location>
</feature>
<feature type="region of interest" description="Disordered" evidence="4">
    <location>
        <begin position="121"/>
        <end position="194"/>
    </location>
</feature>
<feature type="compositionally biased region" description="Basic and acidic residues" evidence="4">
    <location>
        <begin position="166"/>
        <end position="180"/>
    </location>
</feature>
<feature type="binding site" evidence="2">
    <location>
        <position position="218"/>
    </location>
    <ligand>
        <name>Zn(2+)</name>
        <dbReference type="ChEBI" id="CHEBI:29105"/>
        <label>1</label>
    </ligand>
</feature>
<feature type="binding site" evidence="2">
    <location>
        <position position="220"/>
    </location>
    <ligand>
        <name>Zn(2+)</name>
        <dbReference type="ChEBI" id="CHEBI:29105"/>
        <label>1</label>
    </ligand>
</feature>
<feature type="binding site" evidence="2">
    <location>
        <position position="231"/>
    </location>
    <ligand>
        <name>Zn(2+)</name>
        <dbReference type="ChEBI" id="CHEBI:29105"/>
        <label>2</label>
    </ligand>
</feature>
<feature type="binding site" evidence="2">
    <location>
        <position position="236"/>
    </location>
    <ligand>
        <name>Zn(2+)</name>
        <dbReference type="ChEBI" id="CHEBI:29105"/>
        <label>2</label>
    </ligand>
</feature>
<feature type="binding site" evidence="2">
    <location>
        <position position="242"/>
    </location>
    <ligand>
        <name>Zn(2+)</name>
        <dbReference type="ChEBI" id="CHEBI:29105"/>
        <label>1</label>
    </ligand>
</feature>
<feature type="binding site" evidence="2">
    <location>
        <position position="245"/>
    </location>
    <ligand>
        <name>Zn(2+)</name>
        <dbReference type="ChEBI" id="CHEBI:29105"/>
        <label>1</label>
    </ligand>
</feature>
<feature type="binding site" evidence="2">
    <location>
        <position position="258"/>
    </location>
    <ligand>
        <name>Zn(2+)</name>
        <dbReference type="ChEBI" id="CHEBI:29105"/>
        <label>2</label>
    </ligand>
</feature>
<feature type="binding site" evidence="2">
    <location>
        <position position="261"/>
    </location>
    <ligand>
        <name>Zn(2+)</name>
        <dbReference type="ChEBI" id="CHEBI:29105"/>
        <label>2</label>
    </ligand>
</feature>
<feature type="site" description="Histone H3K4me3 binding" evidence="2">
    <location>
        <position position="217"/>
    </location>
</feature>
<feature type="site" description="Histone H3K4me3 binding" evidence="2">
    <location>
        <position position="228"/>
    </location>
</feature>
<feature type="site" description="Histone H3K4me3 binding" evidence="2">
    <location>
        <position position="232"/>
    </location>
</feature>
<feature type="site" description="Histone H3K4me3 binding" evidence="2">
    <location>
        <position position="240"/>
    </location>
</feature>
<protein>
    <recommendedName>
        <fullName>Chromatin modification-related protein YNG2</fullName>
    </recommendedName>
    <alternativeName>
        <fullName>ING1 homolog 2</fullName>
    </alternativeName>
</protein>
<comment type="function">
    <text evidence="1">Component of the NuA4 histone acetyltransferase complex which is involved in transcriptional activation of selected genes principally by acetylation of nucleosomal histone H4 and H2A. The NuA4 complex is also involved in DNA repair. Involved in cell cycle progression and meiosis (By similarity).</text>
</comment>
<comment type="subunit">
    <text evidence="1">Interacts with H3K4me3 and to a lesser extent with H3K4me2. Component of the NuA4 histone acetyltransferase complex.</text>
</comment>
<comment type="subcellular location">
    <subcellularLocation>
        <location evidence="1">Nucleus</location>
    </subcellularLocation>
</comment>
<comment type="domain">
    <text evidence="1">The PHD-type zinc finger mediates the binding to H3K4me3.</text>
</comment>
<comment type="similarity">
    <text evidence="5">Belongs to the ING family.</text>
</comment>
<gene>
    <name type="primary">YNG2</name>
    <name type="ordered locus">CAGL0H02035g</name>
</gene>
<accession>Q6FSB1</accession>